<feature type="propeptide" id="PRO_0000397290" description="Removed in mature form; by autocatalysis" evidence="1">
    <location>
        <begin position="1"/>
        <end position="7"/>
    </location>
</feature>
<feature type="chain" id="PRO_0000397291" description="Proteasome subunit beta 2">
    <location>
        <begin position="8"/>
        <end position="206"/>
    </location>
</feature>
<feature type="active site" description="Nucleophile" evidence="1">
    <location>
        <position position="8"/>
    </location>
</feature>
<dbReference type="EC" id="3.4.25.1" evidence="1"/>
<dbReference type="EMBL" id="CP001140">
    <property type="protein sequence ID" value="ACL11614.1"/>
    <property type="molecule type" value="Genomic_DNA"/>
</dbReference>
<dbReference type="RefSeq" id="WP_012608955.1">
    <property type="nucleotide sequence ID" value="NC_011766.1"/>
</dbReference>
<dbReference type="SMR" id="B8D683"/>
<dbReference type="STRING" id="490899.DKAM_1288"/>
<dbReference type="MEROPS" id="T01.002"/>
<dbReference type="GeneID" id="7171347"/>
<dbReference type="KEGG" id="dka:DKAM_1288"/>
<dbReference type="eggNOG" id="arCOG00970">
    <property type="taxonomic scope" value="Archaea"/>
</dbReference>
<dbReference type="HOGENOM" id="CLU_035750_7_2_2"/>
<dbReference type="Proteomes" id="UP000006903">
    <property type="component" value="Chromosome"/>
</dbReference>
<dbReference type="GO" id="GO:0005737">
    <property type="term" value="C:cytoplasm"/>
    <property type="evidence" value="ECO:0007669"/>
    <property type="project" value="UniProtKB-SubCell"/>
</dbReference>
<dbReference type="GO" id="GO:0019774">
    <property type="term" value="C:proteasome core complex, beta-subunit complex"/>
    <property type="evidence" value="ECO:0007669"/>
    <property type="project" value="UniProtKB-UniRule"/>
</dbReference>
<dbReference type="GO" id="GO:0004298">
    <property type="term" value="F:threonine-type endopeptidase activity"/>
    <property type="evidence" value="ECO:0007669"/>
    <property type="project" value="UniProtKB-UniRule"/>
</dbReference>
<dbReference type="GO" id="GO:0010498">
    <property type="term" value="P:proteasomal protein catabolic process"/>
    <property type="evidence" value="ECO:0007669"/>
    <property type="project" value="UniProtKB-UniRule"/>
</dbReference>
<dbReference type="Gene3D" id="3.60.20.10">
    <property type="entry name" value="Glutamine Phosphoribosylpyrophosphate, subunit 1, domain 1"/>
    <property type="match status" value="1"/>
</dbReference>
<dbReference type="HAMAP" id="MF_02113_A">
    <property type="entry name" value="Proteasome_B_A"/>
    <property type="match status" value="1"/>
</dbReference>
<dbReference type="InterPro" id="IPR029055">
    <property type="entry name" value="Ntn_hydrolases_N"/>
</dbReference>
<dbReference type="InterPro" id="IPR019983">
    <property type="entry name" value="Pept_T1A_Psome_bsu_arc"/>
</dbReference>
<dbReference type="InterPro" id="IPR000243">
    <property type="entry name" value="Pept_T1A_subB"/>
</dbReference>
<dbReference type="InterPro" id="IPR001353">
    <property type="entry name" value="Proteasome_sua/b"/>
</dbReference>
<dbReference type="InterPro" id="IPR023333">
    <property type="entry name" value="Proteasome_suB-type"/>
</dbReference>
<dbReference type="PANTHER" id="PTHR32194:SF0">
    <property type="entry name" value="ATP-DEPENDENT PROTEASE SUBUNIT HSLV"/>
    <property type="match status" value="1"/>
</dbReference>
<dbReference type="PANTHER" id="PTHR32194">
    <property type="entry name" value="METALLOPROTEASE TLDD"/>
    <property type="match status" value="1"/>
</dbReference>
<dbReference type="Pfam" id="PF00227">
    <property type="entry name" value="Proteasome"/>
    <property type="match status" value="1"/>
</dbReference>
<dbReference type="PRINTS" id="PR00141">
    <property type="entry name" value="PROTEASOME"/>
</dbReference>
<dbReference type="SUPFAM" id="SSF56235">
    <property type="entry name" value="N-terminal nucleophile aminohydrolases (Ntn hydrolases)"/>
    <property type="match status" value="1"/>
</dbReference>
<dbReference type="PROSITE" id="PS51476">
    <property type="entry name" value="PROTEASOME_BETA_2"/>
    <property type="match status" value="1"/>
</dbReference>
<evidence type="ECO:0000255" key="1">
    <source>
        <dbReference type="HAMAP-Rule" id="MF_02113"/>
    </source>
</evidence>
<name>PSB2_DESA1</name>
<protein>
    <recommendedName>
        <fullName evidence="1">Proteasome subunit beta 2</fullName>
        <ecNumber evidence="1">3.4.25.1</ecNumber>
    </recommendedName>
    <alternativeName>
        <fullName evidence="1">20S proteasome beta subunit 2</fullName>
    </alternativeName>
    <alternativeName>
        <fullName evidence="1">Proteasome core protein PsmB 2</fullName>
    </alternativeName>
</protein>
<keyword id="KW-0068">Autocatalytic cleavage</keyword>
<keyword id="KW-0963">Cytoplasm</keyword>
<keyword id="KW-0378">Hydrolase</keyword>
<keyword id="KW-0645">Protease</keyword>
<keyword id="KW-0647">Proteasome</keyword>
<keyword id="KW-0888">Threonine protease</keyword>
<keyword id="KW-0865">Zymogen</keyword>
<gene>
    <name evidence="1" type="primary">psmB2</name>
    <name type="ordered locus">DKAM_1288</name>
</gene>
<proteinExistence type="inferred from homology"/>
<accession>B8D683</accession>
<organism>
    <name type="scientific">Desulfurococcus amylolyticus (strain DSM 18924 / JCM 16383 / VKM B-2413 / 1221n)</name>
    <name type="common">Desulfurococcus kamchatkensis</name>
    <dbReference type="NCBI Taxonomy" id="490899"/>
    <lineage>
        <taxon>Archaea</taxon>
        <taxon>Thermoproteota</taxon>
        <taxon>Thermoprotei</taxon>
        <taxon>Desulfurococcales</taxon>
        <taxon>Desulfurococcaceae</taxon>
        <taxon>Desulfurococcus</taxon>
    </lineage>
</organism>
<reference key="1">
    <citation type="journal article" date="2009" name="J. Bacteriol.">
        <title>Complete genome sequence of the anaerobic, protein-degrading hyperthermophilic crenarchaeon Desulfurococcus kamchatkensis.</title>
        <authorList>
            <person name="Ravin N.V."/>
            <person name="Mardanov A.V."/>
            <person name="Beletsky A.V."/>
            <person name="Kublanov I.V."/>
            <person name="Kolganova T.V."/>
            <person name="Lebedinsky A.V."/>
            <person name="Chernyh N.A."/>
            <person name="Bonch-Osmolovskaya E.A."/>
            <person name="Skryabin K.G."/>
        </authorList>
    </citation>
    <scope>NUCLEOTIDE SEQUENCE [LARGE SCALE GENOMIC DNA]</scope>
    <source>
        <strain>DSM 18924 / JCM 16383 / VKM B-2413 / 1221n</strain>
    </source>
</reference>
<sequence length="206" mass="22270">MREAVSKTTTVGLVTGDYVVLAADKRATAGPMVYHKAVKKISKITDYAALTISGLVADAQYIVENARYIAREYEIEMGGPIPIKALASRISLILSVYLRYSPFIVQLLLGGRDSTGASLYYMDLYGSVTREKYMATGSGSPVAFGILEKNYRSDLSLEEAKKLAFNAVSSAIMRDGFSGEGVDIVVIGPGIYSEETIPLKKTIESS</sequence>
<comment type="function">
    <text evidence="1">Component of the proteasome core, a large protease complex with broad specificity involved in protein degradation.</text>
</comment>
<comment type="catalytic activity">
    <reaction evidence="1">
        <text>Cleavage of peptide bonds with very broad specificity.</text>
        <dbReference type="EC" id="3.4.25.1"/>
    </reaction>
</comment>
<comment type="activity regulation">
    <text evidence="1">The formation of the proteasomal ATPase PAN-20S proteasome complex, via the docking of the C-termini of PAN into the intersubunit pockets in the alpha-rings, triggers opening of the gate for substrate entry. Interconversion between the open-gate and close-gate conformations leads to a dynamic regulation of the 20S proteasome proteolysis activity.</text>
</comment>
<comment type="subunit">
    <text evidence="1">The 20S proteasome core is composed of 14 alpha and 14 beta subunits that assemble into four stacked heptameric rings, resulting in a barrel-shaped structure. The two inner rings, each composed of seven catalytic beta subunits, are sandwiched by two outer rings, each composed of seven alpha subunits. The catalytic chamber with the active sites is on the inside of the barrel. Has a gated structure, the ends of the cylinder being occluded by the N-termini of the alpha-subunits. Is capped at one or both ends by the proteasome regulatory ATPase, PAN.</text>
</comment>
<comment type="subcellular location">
    <subcellularLocation>
        <location evidence="1">Cytoplasm</location>
    </subcellularLocation>
</comment>
<comment type="similarity">
    <text evidence="1">Belongs to the peptidase T1B family.</text>
</comment>